<feature type="chain" id="PRO_0000091997" description="Putative ABC transporter ATP-binding protein CA_C1368">
    <location>
        <begin position="1"/>
        <end position="279"/>
    </location>
</feature>
<feature type="domain" description="ABC transporter" evidence="2">
    <location>
        <begin position="4"/>
        <end position="239"/>
    </location>
</feature>
<feature type="binding site" evidence="2">
    <location>
        <begin position="37"/>
        <end position="44"/>
    </location>
    <ligand>
        <name>ATP</name>
        <dbReference type="ChEBI" id="CHEBI:30616"/>
    </ligand>
</feature>
<organism>
    <name type="scientific">Clostridium acetobutylicum (strain ATCC 824 / DSM 792 / JCM 1419 / IAM 19013 / LMG 5710 / NBRC 13948 / NRRL B-527 / VKM B-1787 / 2291 / W)</name>
    <dbReference type="NCBI Taxonomy" id="272562"/>
    <lineage>
        <taxon>Bacteria</taxon>
        <taxon>Bacillati</taxon>
        <taxon>Bacillota</taxon>
        <taxon>Clostridia</taxon>
        <taxon>Eubacteriales</taxon>
        <taxon>Clostridiaceae</taxon>
        <taxon>Clostridium</taxon>
    </lineage>
</organism>
<proteinExistence type="inferred from homology"/>
<sequence>MNQISINNVDYIYSDGFEALHDINMSIKKGERVAILGPNGAGKSTLFNMLNGIISPTSGEVKINGLDTKVKKNLNVIRRDVGMVFQDSDDQLFNSSVMQEIAYGLVNMKVSEEELQSRVKWALNVVNMDGFEKKSPHNLSGGQKKRIALASVLAMKPEVLVLDEPTVSLDPRGTIKLVKLLKKINEEMKITIVFSTHDMDIVPLFADKVYVLNEGKLILQGGVKEVFNNKKVLRNINLRLPRVAHLAEILKSDGCIEFDELPLTIGEIRKCIKNLKGGI</sequence>
<accession>Q97JB8</accession>
<dbReference type="EC" id="7.-.-.-"/>
<dbReference type="EMBL" id="AE001437">
    <property type="protein sequence ID" value="AAK79336.1"/>
    <property type="molecule type" value="Genomic_DNA"/>
</dbReference>
<dbReference type="PIR" id="E97068">
    <property type="entry name" value="E97068"/>
</dbReference>
<dbReference type="RefSeq" id="NP_347996.1">
    <property type="nucleotide sequence ID" value="NC_003030.1"/>
</dbReference>
<dbReference type="RefSeq" id="WP_010964677.1">
    <property type="nucleotide sequence ID" value="NC_003030.1"/>
</dbReference>
<dbReference type="SMR" id="Q97JB8"/>
<dbReference type="STRING" id="272562.CA_C1368"/>
<dbReference type="TCDB" id="3.A.1.23.2">
    <property type="family name" value="the atp-binding cassette (abc) superfamily"/>
</dbReference>
<dbReference type="KEGG" id="cac:CA_C1368"/>
<dbReference type="PATRIC" id="fig|272562.8.peg.1573"/>
<dbReference type="eggNOG" id="COG1122">
    <property type="taxonomic scope" value="Bacteria"/>
</dbReference>
<dbReference type="HOGENOM" id="CLU_000604_1_22_9"/>
<dbReference type="OrthoDB" id="9784332at2"/>
<dbReference type="Proteomes" id="UP000000814">
    <property type="component" value="Chromosome"/>
</dbReference>
<dbReference type="GO" id="GO:0043190">
    <property type="term" value="C:ATP-binding cassette (ABC) transporter complex"/>
    <property type="evidence" value="ECO:0007669"/>
    <property type="project" value="TreeGrafter"/>
</dbReference>
<dbReference type="GO" id="GO:0005524">
    <property type="term" value="F:ATP binding"/>
    <property type="evidence" value="ECO:0007669"/>
    <property type="project" value="UniProtKB-KW"/>
</dbReference>
<dbReference type="GO" id="GO:0016887">
    <property type="term" value="F:ATP hydrolysis activity"/>
    <property type="evidence" value="ECO:0007669"/>
    <property type="project" value="InterPro"/>
</dbReference>
<dbReference type="GO" id="GO:0042626">
    <property type="term" value="F:ATPase-coupled transmembrane transporter activity"/>
    <property type="evidence" value="ECO:0007669"/>
    <property type="project" value="TreeGrafter"/>
</dbReference>
<dbReference type="GO" id="GO:0006824">
    <property type="term" value="P:cobalt ion transport"/>
    <property type="evidence" value="ECO:0007669"/>
    <property type="project" value="InterPro"/>
</dbReference>
<dbReference type="CDD" id="cd03225">
    <property type="entry name" value="ABC_cobalt_CbiO_domain1"/>
    <property type="match status" value="1"/>
</dbReference>
<dbReference type="FunFam" id="3.40.50.300:FF:000224">
    <property type="entry name" value="Energy-coupling factor transporter ATP-binding protein EcfA"/>
    <property type="match status" value="1"/>
</dbReference>
<dbReference type="Gene3D" id="3.40.50.300">
    <property type="entry name" value="P-loop containing nucleotide triphosphate hydrolases"/>
    <property type="match status" value="1"/>
</dbReference>
<dbReference type="InterPro" id="IPR003593">
    <property type="entry name" value="AAA+_ATPase"/>
</dbReference>
<dbReference type="InterPro" id="IPR003439">
    <property type="entry name" value="ABC_transporter-like_ATP-bd"/>
</dbReference>
<dbReference type="InterPro" id="IPR017871">
    <property type="entry name" value="ABC_transporter-like_CS"/>
</dbReference>
<dbReference type="InterPro" id="IPR015856">
    <property type="entry name" value="ABC_transpr_CbiO/EcfA_su"/>
</dbReference>
<dbReference type="InterPro" id="IPR005876">
    <property type="entry name" value="Co_trans_ATP-bd"/>
</dbReference>
<dbReference type="InterPro" id="IPR050095">
    <property type="entry name" value="ECF_ABC_transporter_ATP-bd"/>
</dbReference>
<dbReference type="InterPro" id="IPR027417">
    <property type="entry name" value="P-loop_NTPase"/>
</dbReference>
<dbReference type="NCBIfam" id="TIGR01166">
    <property type="entry name" value="cbiO"/>
    <property type="match status" value="1"/>
</dbReference>
<dbReference type="PANTHER" id="PTHR43553:SF24">
    <property type="entry name" value="ENERGY-COUPLING FACTOR TRANSPORTER ATP-BINDING PROTEIN ECFA1"/>
    <property type="match status" value="1"/>
</dbReference>
<dbReference type="PANTHER" id="PTHR43553">
    <property type="entry name" value="HEAVY METAL TRANSPORTER"/>
    <property type="match status" value="1"/>
</dbReference>
<dbReference type="Pfam" id="PF00005">
    <property type="entry name" value="ABC_tran"/>
    <property type="match status" value="1"/>
</dbReference>
<dbReference type="SMART" id="SM00382">
    <property type="entry name" value="AAA"/>
    <property type="match status" value="1"/>
</dbReference>
<dbReference type="SUPFAM" id="SSF52540">
    <property type="entry name" value="P-loop containing nucleoside triphosphate hydrolases"/>
    <property type="match status" value="1"/>
</dbReference>
<dbReference type="PROSITE" id="PS00211">
    <property type="entry name" value="ABC_TRANSPORTER_1"/>
    <property type="match status" value="1"/>
</dbReference>
<dbReference type="PROSITE" id="PS50893">
    <property type="entry name" value="ABC_TRANSPORTER_2"/>
    <property type="match status" value="1"/>
</dbReference>
<comment type="function">
    <text evidence="1">Probably part of an ABC transporter complex. Responsible for energy coupling to the transport system (By similarity).</text>
</comment>
<comment type="subcellular location">
    <subcellularLocation>
        <location evidence="1">Cell membrane</location>
        <topology evidence="1">Peripheral membrane protein</topology>
    </subcellularLocation>
</comment>
<comment type="similarity">
    <text evidence="3">Belongs to the ABC transporter superfamily.</text>
</comment>
<protein>
    <recommendedName>
        <fullName>Putative ABC transporter ATP-binding protein CA_C1368</fullName>
        <ecNumber>7.-.-.-</ecNumber>
    </recommendedName>
</protein>
<reference key="1">
    <citation type="journal article" date="2001" name="J. Bacteriol.">
        <title>Genome sequence and comparative analysis of the solvent-producing bacterium Clostridium acetobutylicum.</title>
        <authorList>
            <person name="Noelling J."/>
            <person name="Breton G."/>
            <person name="Omelchenko M.V."/>
            <person name="Makarova K.S."/>
            <person name="Zeng Q."/>
            <person name="Gibson R."/>
            <person name="Lee H.M."/>
            <person name="Dubois J."/>
            <person name="Qiu D."/>
            <person name="Hitti J."/>
            <person name="Wolf Y.I."/>
            <person name="Tatusov R.L."/>
            <person name="Sabathe F."/>
            <person name="Doucette-Stamm L.A."/>
            <person name="Soucaille P."/>
            <person name="Daly M.J."/>
            <person name="Bennett G.N."/>
            <person name="Koonin E.V."/>
            <person name="Smith D.R."/>
        </authorList>
    </citation>
    <scope>NUCLEOTIDE SEQUENCE [LARGE SCALE GENOMIC DNA]</scope>
    <source>
        <strain>ATCC 824 / DSM 792 / JCM 1419 / IAM 19013 / LMG 5710 / NBRC 13948 / NRRL B-527 / VKM B-1787 / 2291 / W</strain>
    </source>
</reference>
<gene>
    <name type="ordered locus">CA_C1368</name>
</gene>
<keyword id="KW-0067">ATP-binding</keyword>
<keyword id="KW-1003">Cell membrane</keyword>
<keyword id="KW-0472">Membrane</keyword>
<keyword id="KW-0547">Nucleotide-binding</keyword>
<keyword id="KW-1185">Reference proteome</keyword>
<keyword id="KW-1278">Translocase</keyword>
<keyword id="KW-0813">Transport</keyword>
<evidence type="ECO:0000250" key="1"/>
<evidence type="ECO:0000255" key="2">
    <source>
        <dbReference type="PROSITE-ProRule" id="PRU00434"/>
    </source>
</evidence>
<evidence type="ECO:0000305" key="3"/>
<name>Y1368_CLOAB</name>